<organism>
    <name type="scientific">Staphylococcus aureus (strain Mu3 / ATCC 700698)</name>
    <dbReference type="NCBI Taxonomy" id="418127"/>
    <lineage>
        <taxon>Bacteria</taxon>
        <taxon>Bacillati</taxon>
        <taxon>Bacillota</taxon>
        <taxon>Bacilli</taxon>
        <taxon>Bacillales</taxon>
        <taxon>Staphylococcaceae</taxon>
        <taxon>Staphylococcus</taxon>
    </lineage>
</organism>
<proteinExistence type="inferred from homology"/>
<sequence>MAKTYIFGHKNPDTDAISSAIIMAEFEQLRGNSGAKAYRLGDVSAETQFALDTFNVPAPELLTDDLDGQDVILVDHNEFQQSSDTIASATIKHVIDHHRIANFETAGPLCYRAEPVGCTATILYKMFRERGFEIKPEIAGLMLSAIISDSLLFKSPTCTQQDVKAAEELKDIAKVDIQKYGLDMLKAGASTTDKSVEFLLNMDAKSFTMGDYVTRIAQVNAVDLDEVLNRKEDLEKEMLAVSAQEKYDLFVLVVTDIINSDSKILVVGAEKDKVGEAFNVQLEDDMAFLSGVVSRKKQIVPQITEALTK</sequence>
<comment type="catalytic activity">
    <reaction evidence="1">
        <text>diphosphate + H2O = 2 phosphate + H(+)</text>
        <dbReference type="Rhea" id="RHEA:24576"/>
        <dbReference type="ChEBI" id="CHEBI:15377"/>
        <dbReference type="ChEBI" id="CHEBI:15378"/>
        <dbReference type="ChEBI" id="CHEBI:33019"/>
        <dbReference type="ChEBI" id="CHEBI:43474"/>
        <dbReference type="EC" id="3.6.1.1"/>
    </reaction>
</comment>
<comment type="cofactor">
    <cofactor evidence="1">
        <name>Mn(2+)</name>
        <dbReference type="ChEBI" id="CHEBI:29035"/>
    </cofactor>
    <text evidence="1">Binds 2 manganese ions per subunit.</text>
</comment>
<comment type="subcellular location">
    <subcellularLocation>
        <location evidence="1">Cytoplasm</location>
    </subcellularLocation>
</comment>
<comment type="similarity">
    <text evidence="1">Belongs to the PPase class C family.</text>
</comment>
<feature type="chain" id="PRO_1000012318" description="Probable manganese-dependent inorganic pyrophosphatase">
    <location>
        <begin position="1"/>
        <end position="309"/>
    </location>
</feature>
<feature type="binding site" evidence="1">
    <location>
        <position position="9"/>
    </location>
    <ligand>
        <name>Mn(2+)</name>
        <dbReference type="ChEBI" id="CHEBI:29035"/>
        <label>1</label>
    </ligand>
</feature>
<feature type="binding site" evidence="1">
    <location>
        <position position="13"/>
    </location>
    <ligand>
        <name>Mn(2+)</name>
        <dbReference type="ChEBI" id="CHEBI:29035"/>
        <label>1</label>
    </ligand>
</feature>
<feature type="binding site" evidence="1">
    <location>
        <position position="15"/>
    </location>
    <ligand>
        <name>Mn(2+)</name>
        <dbReference type="ChEBI" id="CHEBI:29035"/>
        <label>2</label>
    </ligand>
</feature>
<feature type="binding site" evidence="1">
    <location>
        <position position="75"/>
    </location>
    <ligand>
        <name>Mn(2+)</name>
        <dbReference type="ChEBI" id="CHEBI:29035"/>
        <label>1</label>
    </ligand>
</feature>
<feature type="binding site" evidence="1">
    <location>
        <position position="75"/>
    </location>
    <ligand>
        <name>Mn(2+)</name>
        <dbReference type="ChEBI" id="CHEBI:29035"/>
        <label>2</label>
    </ligand>
</feature>
<feature type="binding site" evidence="1">
    <location>
        <position position="97"/>
    </location>
    <ligand>
        <name>Mn(2+)</name>
        <dbReference type="ChEBI" id="CHEBI:29035"/>
        <label>2</label>
    </ligand>
</feature>
<feature type="binding site" evidence="1">
    <location>
        <position position="149"/>
    </location>
    <ligand>
        <name>Mn(2+)</name>
        <dbReference type="ChEBI" id="CHEBI:29035"/>
        <label>2</label>
    </ligand>
</feature>
<accession>A7X451</accession>
<name>PPAC_STAA1</name>
<evidence type="ECO:0000255" key="1">
    <source>
        <dbReference type="HAMAP-Rule" id="MF_00207"/>
    </source>
</evidence>
<dbReference type="EC" id="3.6.1.1" evidence="1"/>
<dbReference type="EMBL" id="AP009324">
    <property type="protein sequence ID" value="BAF78787.1"/>
    <property type="molecule type" value="Genomic_DNA"/>
</dbReference>
<dbReference type="RefSeq" id="WP_001140871.1">
    <property type="nucleotide sequence ID" value="NZ_CTYB01000056.1"/>
</dbReference>
<dbReference type="SMR" id="A7X451"/>
<dbReference type="KEGG" id="saw:SAHV_1904"/>
<dbReference type="HOGENOM" id="CLU_025243_0_1_9"/>
<dbReference type="GO" id="GO:0005737">
    <property type="term" value="C:cytoplasm"/>
    <property type="evidence" value="ECO:0007669"/>
    <property type="project" value="UniProtKB-SubCell"/>
</dbReference>
<dbReference type="GO" id="GO:0004427">
    <property type="term" value="F:inorganic diphosphate phosphatase activity"/>
    <property type="evidence" value="ECO:0007669"/>
    <property type="project" value="UniProtKB-UniRule"/>
</dbReference>
<dbReference type="GO" id="GO:0030145">
    <property type="term" value="F:manganese ion binding"/>
    <property type="evidence" value="ECO:0007669"/>
    <property type="project" value="UniProtKB-UniRule"/>
</dbReference>
<dbReference type="FunFam" id="3.10.310.20:FF:000001">
    <property type="entry name" value="Probable manganese-dependent inorganic pyrophosphatase"/>
    <property type="match status" value="1"/>
</dbReference>
<dbReference type="FunFam" id="3.90.1640.10:FF:000001">
    <property type="entry name" value="Probable manganese-dependent inorganic pyrophosphatase"/>
    <property type="match status" value="1"/>
</dbReference>
<dbReference type="Gene3D" id="3.10.310.20">
    <property type="entry name" value="DHHA2 domain"/>
    <property type="match status" value="1"/>
</dbReference>
<dbReference type="Gene3D" id="3.90.1640.10">
    <property type="entry name" value="inorganic pyrophosphatase (n-terminal core)"/>
    <property type="match status" value="1"/>
</dbReference>
<dbReference type="HAMAP" id="MF_00207">
    <property type="entry name" value="PPase_C"/>
    <property type="match status" value="1"/>
</dbReference>
<dbReference type="InterPro" id="IPR001667">
    <property type="entry name" value="DDH_dom"/>
</dbReference>
<dbReference type="InterPro" id="IPR038763">
    <property type="entry name" value="DHH_sf"/>
</dbReference>
<dbReference type="InterPro" id="IPR004097">
    <property type="entry name" value="DHHA2"/>
</dbReference>
<dbReference type="InterPro" id="IPR038222">
    <property type="entry name" value="DHHA2_dom_sf"/>
</dbReference>
<dbReference type="InterPro" id="IPR022934">
    <property type="entry name" value="Mn-dep_inorganic_PyrPase"/>
</dbReference>
<dbReference type="NCBIfam" id="NF003877">
    <property type="entry name" value="PRK05427.1"/>
    <property type="match status" value="1"/>
</dbReference>
<dbReference type="PANTHER" id="PTHR12112">
    <property type="entry name" value="BNIP - RELATED"/>
    <property type="match status" value="1"/>
</dbReference>
<dbReference type="PANTHER" id="PTHR12112:SF22">
    <property type="entry name" value="MANGANESE-DEPENDENT INORGANIC PYROPHOSPHATASE-RELATED"/>
    <property type="match status" value="1"/>
</dbReference>
<dbReference type="Pfam" id="PF01368">
    <property type="entry name" value="DHH"/>
    <property type="match status" value="1"/>
</dbReference>
<dbReference type="Pfam" id="PF02833">
    <property type="entry name" value="DHHA2"/>
    <property type="match status" value="1"/>
</dbReference>
<dbReference type="SMART" id="SM01131">
    <property type="entry name" value="DHHA2"/>
    <property type="match status" value="1"/>
</dbReference>
<dbReference type="SUPFAM" id="SSF64182">
    <property type="entry name" value="DHH phosphoesterases"/>
    <property type="match status" value="1"/>
</dbReference>
<protein>
    <recommendedName>
        <fullName evidence="1">Probable manganese-dependent inorganic pyrophosphatase</fullName>
        <ecNumber evidence="1">3.6.1.1</ecNumber>
    </recommendedName>
    <alternativeName>
        <fullName evidence="1">Pyrophosphate phospho-hydrolase</fullName>
        <shortName evidence="1">PPase</shortName>
    </alternativeName>
</protein>
<reference key="1">
    <citation type="journal article" date="2008" name="Antimicrob. Agents Chemother.">
        <title>Mutated response regulator graR is responsible for phenotypic conversion of Staphylococcus aureus from heterogeneous vancomycin-intermediate resistance to vancomycin-intermediate resistance.</title>
        <authorList>
            <person name="Neoh H.-M."/>
            <person name="Cui L."/>
            <person name="Yuzawa H."/>
            <person name="Takeuchi F."/>
            <person name="Matsuo M."/>
            <person name="Hiramatsu K."/>
        </authorList>
    </citation>
    <scope>NUCLEOTIDE SEQUENCE [LARGE SCALE GENOMIC DNA]</scope>
    <source>
        <strain>Mu3 / ATCC 700698</strain>
    </source>
</reference>
<gene>
    <name evidence="1" type="primary">ppaC</name>
    <name type="ordered locus">SAHV_1904</name>
</gene>
<keyword id="KW-0963">Cytoplasm</keyword>
<keyword id="KW-0378">Hydrolase</keyword>
<keyword id="KW-0464">Manganese</keyword>
<keyword id="KW-0479">Metal-binding</keyword>